<feature type="chain" id="PRO_1000139831" description="Chitooligosaccharide deacetylase">
    <location>
        <begin position="1"/>
        <end position="252"/>
    </location>
</feature>
<feature type="binding site" evidence="1">
    <location>
        <position position="61"/>
    </location>
    <ligand>
        <name>Mg(2+)</name>
        <dbReference type="ChEBI" id="CHEBI:18420"/>
    </ligand>
</feature>
<feature type="binding site" evidence="1">
    <location>
        <position position="125"/>
    </location>
    <ligand>
        <name>Mg(2+)</name>
        <dbReference type="ChEBI" id="CHEBI:18420"/>
    </ligand>
</feature>
<evidence type="ECO:0000255" key="1">
    <source>
        <dbReference type="HAMAP-Rule" id="MF_01246"/>
    </source>
</evidence>
<name>CHBG_SALDC</name>
<accession>B5FJC2</accession>
<reference key="1">
    <citation type="journal article" date="2011" name="J. Bacteriol.">
        <title>Comparative genomics of 28 Salmonella enterica isolates: evidence for CRISPR-mediated adaptive sublineage evolution.</title>
        <authorList>
            <person name="Fricke W.F."/>
            <person name="Mammel M.K."/>
            <person name="McDermott P.F."/>
            <person name="Tartera C."/>
            <person name="White D.G."/>
            <person name="Leclerc J.E."/>
            <person name="Ravel J."/>
            <person name="Cebula T.A."/>
        </authorList>
    </citation>
    <scope>NUCLEOTIDE SEQUENCE [LARGE SCALE GENOMIC DNA]</scope>
    <source>
        <strain>CT_02021853</strain>
    </source>
</reference>
<keyword id="KW-0119">Carbohydrate metabolism</keyword>
<keyword id="KW-0146">Chitin degradation</keyword>
<keyword id="KW-0963">Cytoplasm</keyword>
<keyword id="KW-0378">Hydrolase</keyword>
<keyword id="KW-0460">Magnesium</keyword>
<keyword id="KW-0479">Metal-binding</keyword>
<keyword id="KW-0624">Polysaccharide degradation</keyword>
<dbReference type="EC" id="3.5.1.105" evidence="1"/>
<dbReference type="EMBL" id="CP001144">
    <property type="protein sequence ID" value="ACH73639.1"/>
    <property type="molecule type" value="Genomic_DNA"/>
</dbReference>
<dbReference type="RefSeq" id="WP_000442727.1">
    <property type="nucleotide sequence ID" value="NC_011205.1"/>
</dbReference>
<dbReference type="SMR" id="B5FJC2"/>
<dbReference type="KEGG" id="sed:SeD_A2027"/>
<dbReference type="HOGENOM" id="CLU_064244_4_1_6"/>
<dbReference type="UniPathway" id="UPA00349"/>
<dbReference type="Proteomes" id="UP000008322">
    <property type="component" value="Chromosome"/>
</dbReference>
<dbReference type="GO" id="GO:0005737">
    <property type="term" value="C:cytoplasm"/>
    <property type="evidence" value="ECO:0007669"/>
    <property type="project" value="UniProtKB-SubCell"/>
</dbReference>
<dbReference type="GO" id="GO:0036311">
    <property type="term" value="F:chitin disaccharide deacetylase activity"/>
    <property type="evidence" value="ECO:0007669"/>
    <property type="project" value="UniProtKB-UniRule"/>
</dbReference>
<dbReference type="GO" id="GO:0019213">
    <property type="term" value="F:deacetylase activity"/>
    <property type="evidence" value="ECO:0007669"/>
    <property type="project" value="TreeGrafter"/>
</dbReference>
<dbReference type="GO" id="GO:0046872">
    <property type="term" value="F:metal ion binding"/>
    <property type="evidence" value="ECO:0007669"/>
    <property type="project" value="UniProtKB-KW"/>
</dbReference>
<dbReference type="GO" id="GO:0006032">
    <property type="term" value="P:chitin catabolic process"/>
    <property type="evidence" value="ECO:0007669"/>
    <property type="project" value="UniProtKB-UniPathway"/>
</dbReference>
<dbReference type="GO" id="GO:0052777">
    <property type="term" value="P:diacetylchitobiose catabolic process"/>
    <property type="evidence" value="ECO:0007669"/>
    <property type="project" value="UniProtKB-UniRule"/>
</dbReference>
<dbReference type="GO" id="GO:0000272">
    <property type="term" value="P:polysaccharide catabolic process"/>
    <property type="evidence" value="ECO:0007669"/>
    <property type="project" value="UniProtKB-UniRule"/>
</dbReference>
<dbReference type="CDD" id="cd10803">
    <property type="entry name" value="YdjC_EF3048_like"/>
    <property type="match status" value="1"/>
</dbReference>
<dbReference type="FunFam" id="3.20.20.370:FF:000001">
    <property type="entry name" value="Chitooligosaccharide deacetylase"/>
    <property type="match status" value="1"/>
</dbReference>
<dbReference type="Gene3D" id="3.20.20.370">
    <property type="entry name" value="Glycoside hydrolase/deacetylase"/>
    <property type="match status" value="1"/>
</dbReference>
<dbReference type="HAMAP" id="MF_01246">
    <property type="entry name" value="COD"/>
    <property type="match status" value="1"/>
</dbReference>
<dbReference type="InterPro" id="IPR022948">
    <property type="entry name" value="COD_ChbG_bac"/>
</dbReference>
<dbReference type="InterPro" id="IPR011330">
    <property type="entry name" value="Glyco_hydro/deAcase_b/a-brl"/>
</dbReference>
<dbReference type="InterPro" id="IPR006879">
    <property type="entry name" value="YdjC-like"/>
</dbReference>
<dbReference type="NCBIfam" id="NF002559">
    <property type="entry name" value="PRK02134.1"/>
    <property type="match status" value="1"/>
</dbReference>
<dbReference type="PANTHER" id="PTHR31609:SF1">
    <property type="entry name" value="CARBOHYDRATE DEACETYLASE"/>
    <property type="match status" value="1"/>
</dbReference>
<dbReference type="PANTHER" id="PTHR31609">
    <property type="entry name" value="YDJC DEACETYLASE FAMILY MEMBER"/>
    <property type="match status" value="1"/>
</dbReference>
<dbReference type="Pfam" id="PF04794">
    <property type="entry name" value="YdjC"/>
    <property type="match status" value="1"/>
</dbReference>
<dbReference type="SUPFAM" id="SSF88713">
    <property type="entry name" value="Glycoside hydrolase/deacetylase"/>
    <property type="match status" value="1"/>
</dbReference>
<comment type="function">
    <text evidence="1">Involved in the degradation of chitin. ChbG is essential for growth on the acetylated chitooligosaccharides chitobiose and chitotriose but is dispensable for growth on cellobiose and chitosan dimer, the deacetylated form of chitobiose. Deacetylation of chitobiose-6-P and chitotriose-6-P is necessary for both the activation of the chb promoter by the regulatory protein ChbR and the hydrolysis of phosphorylated beta-glucosides by the phospho-beta-glucosidase ChbF. Catalyzes the removal of only one acetyl group from chitobiose-6-P to yield monoacetylchitobiose-6-P, the inducer of ChbR and the substrate of ChbF.</text>
</comment>
<comment type="catalytic activity">
    <reaction evidence="1">
        <text>N,N'-diacetylchitobiose + H2O = N-acetyl-beta-D-glucosaminyl-(1-&gt;4)-D-glucosamine + acetate</text>
        <dbReference type="Rhea" id="RHEA:27469"/>
        <dbReference type="ChEBI" id="CHEBI:15377"/>
        <dbReference type="ChEBI" id="CHEBI:28681"/>
        <dbReference type="ChEBI" id="CHEBI:30089"/>
        <dbReference type="ChEBI" id="CHEBI:59910"/>
        <dbReference type="EC" id="3.5.1.105"/>
    </reaction>
</comment>
<comment type="catalytic activity">
    <reaction evidence="1">
        <text>diacetylchitobiose-6'-phosphate + H2O = N'-monoacetylchitobiose-6'-phosphate + acetate</text>
        <dbReference type="Rhea" id="RHEA:35083"/>
        <dbReference type="ChEBI" id="CHEBI:15377"/>
        <dbReference type="ChEBI" id="CHEBI:30089"/>
        <dbReference type="ChEBI" id="CHEBI:64883"/>
        <dbReference type="ChEBI" id="CHEBI:71315"/>
    </reaction>
</comment>
<comment type="cofactor">
    <cofactor evidence="1">
        <name>Mg(2+)</name>
        <dbReference type="ChEBI" id="CHEBI:18420"/>
    </cofactor>
</comment>
<comment type="pathway">
    <text evidence="1">Glycan degradation; chitin degradation.</text>
</comment>
<comment type="subunit">
    <text evidence="1">Homodimer.</text>
</comment>
<comment type="subcellular location">
    <subcellularLocation>
        <location evidence="1">Cytoplasm</location>
    </subcellularLocation>
</comment>
<comment type="similarity">
    <text evidence="1">Belongs to the YdjC deacetylase family. ChbG subfamily.</text>
</comment>
<sequence length="252" mass="28008">MERVLIVNADDFGLSKGQNYGIVEAYRNGVVTSTTALVNGEAIDHAAQLSRELPALGVGMHFVLTLGKPVSEMPGLTRDGLLGKWIWQMAEEDTLPLDEIAHELACQYQRFIDVFGREPTHLDSHHHVHMFPQIFPIVAHFAAQRGIALRIDRQTVLNADDLPSDLRSTQGFSSEFYGEEITEACFLRILDASAHRGEASLEVMCHPAFVDNIIRQSAYCYPRLTELEVLTSASLKAAIAERGYRPGSFLDI</sequence>
<gene>
    <name evidence="1" type="primary">chbG</name>
    <name type="ordered locus">SeD_A2027</name>
</gene>
<proteinExistence type="inferred from homology"/>
<protein>
    <recommendedName>
        <fullName evidence="1">Chitooligosaccharide deacetylase</fullName>
        <shortName evidence="1">COD</shortName>
        <ecNumber evidence="1">3.5.1.105</ecNumber>
    </recommendedName>
    <alternativeName>
        <fullName evidence="1">Chitin disaccharide deacetylase</fullName>
    </alternativeName>
    <alternativeName>
        <fullName evidence="1">Chitobiose deacetylase</fullName>
    </alternativeName>
    <alternativeName>
        <fullName evidence="1">Chitobiose-6P deacetylase</fullName>
    </alternativeName>
    <alternativeName>
        <fullName evidence="1">Chitotriose deacetylase</fullName>
    </alternativeName>
    <alternativeName>
        <fullName evidence="1">Chitotriose-6P deacetylase</fullName>
    </alternativeName>
</protein>
<organism>
    <name type="scientific">Salmonella dublin (strain CT_02021853)</name>
    <dbReference type="NCBI Taxonomy" id="439851"/>
    <lineage>
        <taxon>Bacteria</taxon>
        <taxon>Pseudomonadati</taxon>
        <taxon>Pseudomonadota</taxon>
        <taxon>Gammaproteobacteria</taxon>
        <taxon>Enterobacterales</taxon>
        <taxon>Enterobacteriaceae</taxon>
        <taxon>Salmonella</taxon>
    </lineage>
</organism>